<comment type="function">
    <text evidence="7 8 9">Protein tyrosine phosphatase that acts as a regulator of energy metabolism by mediating dephosphorylation of insulin receptor (Insr) (PubMed:17693256, PubMed:20655470). Prevents decarboxylation of osteocalcin (Bglap and Bglap2) via an indirect mechanism: dephosphorylation of insulin receptor prevents insulin signaling-dependent decarboxylation of osteocalcin, preventing the hormone activity of osteocalcin (PubMed:17693256, PubMed:20655470). May play a role in the maintenance of pluripotency (PubMed:8951793).</text>
</comment>
<comment type="catalytic activity">
    <reaction evidence="5 8">
        <text>O-phospho-L-tyrosyl-[protein] + H2O = L-tyrosyl-[protein] + phosphate</text>
        <dbReference type="Rhea" id="RHEA:10684"/>
        <dbReference type="Rhea" id="RHEA-COMP:10136"/>
        <dbReference type="Rhea" id="RHEA-COMP:20101"/>
        <dbReference type="ChEBI" id="CHEBI:15377"/>
        <dbReference type="ChEBI" id="CHEBI:43474"/>
        <dbReference type="ChEBI" id="CHEBI:46858"/>
        <dbReference type="ChEBI" id="CHEBI:61978"/>
        <dbReference type="EC" id="3.1.3.48"/>
    </reaction>
</comment>
<comment type="subcellular location">
    <subcellularLocation>
        <location>Membrane</location>
        <topology>Single-pass type I membrane protein</topology>
    </subcellularLocation>
</comment>
<comment type="developmental stage">
    <text evidence="9">Detectable in the epiblast of oocytes and throughout early mouse embryo development (PubMed:8951793). In adult, expression is localized in gonadal germ cells (PubMed:8951793).</text>
</comment>
<comment type="induction">
    <text evidence="9">Down-regulated during cell differentiation.</text>
</comment>
<comment type="disruption phenotype">
    <text evidence="7">Mice are hypoglycemic and are protected from obesity and glucose intolerance because of an increase in beta-cell proliferation, insulin secretion, and insulin sensitivity.</text>
</comment>
<comment type="similarity">
    <text evidence="10">Belongs to the protein-tyrosine phosphatase family. Receptor class 3 subfamily.</text>
</comment>
<evidence type="ECO:0000250" key="1"/>
<evidence type="ECO:0000255" key="2"/>
<evidence type="ECO:0000255" key="3">
    <source>
        <dbReference type="PROSITE-ProRule" id="PRU00160"/>
    </source>
</evidence>
<evidence type="ECO:0000255" key="4">
    <source>
        <dbReference type="PROSITE-ProRule" id="PRU00316"/>
    </source>
</evidence>
<evidence type="ECO:0000255" key="5">
    <source>
        <dbReference type="PROSITE-ProRule" id="PRU10044"/>
    </source>
</evidence>
<evidence type="ECO:0000256" key="6">
    <source>
        <dbReference type="SAM" id="MobiDB-lite"/>
    </source>
</evidence>
<evidence type="ECO:0000269" key="7">
    <source>
    </source>
</evidence>
<evidence type="ECO:0000269" key="8">
    <source>
    </source>
</evidence>
<evidence type="ECO:0000269" key="9">
    <source>
    </source>
</evidence>
<evidence type="ECO:0000305" key="10"/>
<gene>
    <name type="primary">Ptprv</name>
    <name type="synonym">Esp</name>
</gene>
<sequence length="1705" mass="186796">MRPLILLAALLWLQDSLAQEDVCSSLDGSPDRQGGGPPLSVSVTSRGRPTSLFLSWVAAEPGGFDYALCLRAMNLSGFPEGQQLQAHTNESSFEFHGLVPGSRYQLELTVLRPCWQNVTITLTARTAPTVVRGLQLHSTGSPASLEASWSDASGDQDSYQLLLYHPESHTLACNVSVSPDTLSYNFGDLLPGSQYVLEVITWAGSLHAKTSILQWTEPVPPDHLRVRALGTSSLQAFWNSSEGATWFHLILTDLLEGTNLTKVVRQGISTHTFLRLSPGTPYQLKICAAAGPHQIWGPNATEWTYPSYPSDLVLTPLWNELWASWKAGQGARDGYVLKLSGPVENTTTLGPEECNAVFPGPLPPGHYTLGLRVLAGPYDAWVEGSIWLAESAARPMEVPGARLWLEGLEATKQPGRRALLYSVDAPGLLGNISVSSGATHVTFCGLVPGAHYRVDIASSMGDITQSLTGYTSPLPPQSLEIISRNSPSDLTIGWAPAPGQMEGYKVTWHQDGSQRSPGDLVDLGPDISSLTLKSLVPGSCYTVSAWAWSGNLSSDSQKIHSCTRPAPPTNLSLGFAHQPATLRASWCHPPGGRDAFQLRLYRLRPLTLESEKILSQEAQNFSWAQLPAGYEFQVQLSTLWGSEESGSANTTGWTPPSAPTLVNVTSEAPTQLHVSWVHAAGDRSSYQVTLYQESTRTATSIVGPKADSTSFWGLTPGTKYKVEAISWAGPLYTAAANVSAWTYPLTPNELLASMQAGSAVVNLAWPSGPLGRGTCHAQLSDAGHLSWEQPLSLGQDLLMLRNLIPGHTVSLSVKCRAGPLQASTHPLVLSVEPGPVEDVFCQPEATYLSLNWTMPTGDVAVCLVEVEQLVPGGSAHFVFQVNTSEDALLLPNLTPTTSYRLSLTVLGGNRQWSRAVTLVCTTSAEVWHPPELAEAPQVELGTGMGVTVTRGMFGKDDGQIQWYGIIATINMTLAQPSQEAINHTWYDHYYRGHDSYLALLFPNPFYPEPWAVPRSWTVPVGTEDCDNTQEICNGHLKPGFQYRFSIAAFSRLSSPETILAFSAFSEPQASISLVAMPLTVMMGTVVGCIIIVCAVLCLLCRRGLKGPRSEKNGFSQELMPYNLWRTHRPIPSHSFRQSYEAKSARAHQAFFQEFEELKEVGKDQPRLEAEHPANITKNRYPHVLPYDHSRVRLTQLSGEPHSDYINANFIPGYSHPQEIIATQGPLKKTVEDFWRLVWEQQVHVIIMLTVGMENGRVLCEHYWPVNSTPVTHGHITTHLLAEESEDEWTRREFQLQHGAEQKQRRVKQLQFTTWPDHSVPEAPSSLLAFVELVQEEVKATQGKGPILVHCSAGVGRTGTFVALLPAVRQLEEEQVVDVFNTVYILRLHRPLMIQTLSQYIFLHSCLLNKILEGPSDASDSGPIPVMNFAQACAKRAANANAGFLKEYRLLKQAIKDETGSLLPSPDYNQNSIASCHHSQEQLALVEESPADNMLAASLFPGGPSGRDHVVLTGSAGPKELWEMVWEHGAYVLVSLGLPDTKEKPQDIWPMEMQPIVTDMVTVHRVAESNTAGWPSTLIRVIHGDSGTERQVQCLQFPHCETGSELPANTLLTFLDAVGQCCSRGNSKKPGTLLSHSSKVTNQLSTFLAMEQLLQQAGTERTVDVFSVALKQTQACAVKTPTLEQYIYLYNCLNSALRNRLPRARK</sequence>
<protein>
    <recommendedName>
        <fullName>Receptor-type tyrosine-protein phosphatase V</fullName>
        <shortName>R-PTP-V</shortName>
        <ecNumber evidence="8">3.1.3.48</ecNumber>
    </recommendedName>
    <alternativeName>
        <fullName>Embryonic stem cell protein-tyrosine phosphatase</fullName>
        <shortName>ES cell phosphatase</shortName>
    </alternativeName>
</protein>
<accession>P70289</accession>
<name>PTPRV_MOUSE</name>
<proteinExistence type="evidence at protein level"/>
<organism>
    <name type="scientific">Mus musculus</name>
    <name type="common">Mouse</name>
    <dbReference type="NCBI Taxonomy" id="10090"/>
    <lineage>
        <taxon>Eukaryota</taxon>
        <taxon>Metazoa</taxon>
        <taxon>Chordata</taxon>
        <taxon>Craniata</taxon>
        <taxon>Vertebrata</taxon>
        <taxon>Euteleostomi</taxon>
        <taxon>Mammalia</taxon>
        <taxon>Eutheria</taxon>
        <taxon>Euarchontoglires</taxon>
        <taxon>Glires</taxon>
        <taxon>Rodentia</taxon>
        <taxon>Myomorpha</taxon>
        <taxon>Muroidea</taxon>
        <taxon>Muridae</taxon>
        <taxon>Murinae</taxon>
        <taxon>Mus</taxon>
        <taxon>Mus</taxon>
    </lineage>
</organism>
<feature type="signal peptide" evidence="2">
    <location>
        <begin position="1"/>
        <end position="18"/>
    </location>
</feature>
<feature type="chain" id="PRO_0000025466" description="Receptor-type tyrosine-protein phosphatase V">
    <location>
        <begin position="19"/>
        <end position="1705"/>
    </location>
</feature>
<feature type="topological domain" description="Extracellular" evidence="2">
    <location>
        <begin position="19"/>
        <end position="1077"/>
    </location>
</feature>
<feature type="transmembrane region" description="Helical" evidence="2">
    <location>
        <begin position="1078"/>
        <end position="1100"/>
    </location>
</feature>
<feature type="topological domain" description="Cytoplasmic" evidence="2">
    <location>
        <begin position="1101"/>
        <end position="1705"/>
    </location>
</feature>
<feature type="domain" description="Fibronectin type-III 1" evidence="4">
    <location>
        <begin position="37"/>
        <end position="129"/>
    </location>
</feature>
<feature type="domain" description="Fibronectin type-III 2" evidence="4">
    <location>
        <begin position="130"/>
        <end position="222"/>
    </location>
</feature>
<feature type="domain" description="Fibronectin type-III 3" evidence="4">
    <location>
        <begin position="218"/>
        <end position="305"/>
    </location>
</feature>
<feature type="domain" description="Fibronectin type-III 4" evidence="4">
    <location>
        <begin position="306"/>
        <end position="388"/>
    </location>
</feature>
<feature type="domain" description="Fibronectin type-III 5" evidence="4">
    <location>
        <begin position="393"/>
        <end position="454"/>
    </location>
</feature>
<feature type="domain" description="Fibronectin type-III 6" evidence="4">
    <location>
        <begin position="475"/>
        <end position="569"/>
    </location>
</feature>
<feature type="domain" description="Fibronectin type-III 7" evidence="4">
    <location>
        <begin position="565"/>
        <end position="654"/>
    </location>
</feature>
<feature type="domain" description="Fibronectin type-III 8" evidence="4">
    <location>
        <begin position="655"/>
        <end position="749"/>
    </location>
</feature>
<feature type="domain" description="Fibronectin type-III 9" evidence="4">
    <location>
        <begin position="744"/>
        <end position="831"/>
    </location>
</feature>
<feature type="domain" description="Fibronectin type-III 10" evidence="4">
    <location>
        <begin position="832"/>
        <end position="926"/>
    </location>
</feature>
<feature type="domain" description="Tyrosine-protein phosphatase 1" evidence="3">
    <location>
        <begin position="1150"/>
        <end position="1409"/>
    </location>
</feature>
<feature type="domain" description="Tyrosine-protein phosphatase 2" evidence="3">
    <location>
        <begin position="1427"/>
        <end position="1695"/>
    </location>
</feature>
<feature type="region of interest" description="Disordered" evidence="6">
    <location>
        <begin position="24"/>
        <end position="44"/>
    </location>
</feature>
<feature type="active site" description="Phosphocysteine intermediate" evidence="3 5">
    <location>
        <position position="1350"/>
    </location>
</feature>
<feature type="binding site" evidence="1">
    <location>
        <position position="1316"/>
    </location>
    <ligand>
        <name>substrate</name>
    </ligand>
</feature>
<feature type="binding site" evidence="1">
    <location>
        <begin position="1350"/>
        <end position="1356"/>
    </location>
    <ligand>
        <name>substrate</name>
    </ligand>
</feature>
<feature type="binding site" evidence="1">
    <location>
        <position position="1394"/>
    </location>
    <ligand>
        <name>substrate</name>
    </ligand>
</feature>
<feature type="glycosylation site" description="N-linked (GlcNAc...) asparagine" evidence="2">
    <location>
        <position position="74"/>
    </location>
</feature>
<feature type="glycosylation site" description="N-linked (GlcNAc...) asparagine" evidence="2">
    <location>
        <position position="89"/>
    </location>
</feature>
<feature type="glycosylation site" description="N-linked (GlcNAc...) asparagine" evidence="2">
    <location>
        <position position="117"/>
    </location>
</feature>
<feature type="glycosylation site" description="N-linked (GlcNAc...) asparagine" evidence="2">
    <location>
        <position position="174"/>
    </location>
</feature>
<feature type="glycosylation site" description="N-linked (GlcNAc...) asparagine" evidence="2">
    <location>
        <position position="239"/>
    </location>
</feature>
<feature type="glycosylation site" description="N-linked (GlcNAc...) asparagine" evidence="2">
    <location>
        <position position="259"/>
    </location>
</feature>
<feature type="glycosylation site" description="N-linked (GlcNAc...) asparagine" evidence="2">
    <location>
        <position position="299"/>
    </location>
</feature>
<feature type="glycosylation site" description="N-linked (GlcNAc...) asparagine" evidence="2">
    <location>
        <position position="345"/>
    </location>
</feature>
<feature type="glycosylation site" description="N-linked (GlcNAc...) asparagine" evidence="2">
    <location>
        <position position="431"/>
    </location>
</feature>
<feature type="glycosylation site" description="N-linked (GlcNAc...) asparagine" evidence="2">
    <location>
        <position position="551"/>
    </location>
</feature>
<feature type="glycosylation site" description="N-linked (GlcNAc...) asparagine" evidence="2">
    <location>
        <position position="570"/>
    </location>
</feature>
<feature type="glycosylation site" description="N-linked (GlcNAc...) asparagine" evidence="2">
    <location>
        <position position="620"/>
    </location>
</feature>
<feature type="glycosylation site" description="N-linked (GlcNAc...) asparagine" evidence="2">
    <location>
        <position position="649"/>
    </location>
</feature>
<feature type="glycosylation site" description="N-linked (GlcNAc...) asparagine" evidence="2">
    <location>
        <position position="663"/>
    </location>
</feature>
<feature type="glycosylation site" description="N-linked (GlcNAc...) asparagine" evidence="2">
    <location>
        <position position="737"/>
    </location>
</feature>
<feature type="glycosylation site" description="N-linked (GlcNAc...) asparagine" evidence="2">
    <location>
        <position position="851"/>
    </location>
</feature>
<feature type="glycosylation site" description="N-linked (GlcNAc...) asparagine" evidence="2">
    <location>
        <position position="882"/>
    </location>
</feature>
<feature type="glycosylation site" description="N-linked (GlcNAc...) asparagine" evidence="2">
    <location>
        <position position="970"/>
    </location>
</feature>
<feature type="glycosylation site" description="N-linked (GlcNAc...) asparagine" evidence="2">
    <location>
        <position position="982"/>
    </location>
</feature>
<keyword id="KW-0325">Glycoprotein</keyword>
<keyword id="KW-0378">Hydrolase</keyword>
<keyword id="KW-0472">Membrane</keyword>
<keyword id="KW-0904">Protein phosphatase</keyword>
<keyword id="KW-1185">Reference proteome</keyword>
<keyword id="KW-0677">Repeat</keyword>
<keyword id="KW-0732">Signal</keyword>
<keyword id="KW-0812">Transmembrane</keyword>
<keyword id="KW-1133">Transmembrane helix</keyword>
<dbReference type="EC" id="3.1.3.48" evidence="8"/>
<dbReference type="EMBL" id="U36488">
    <property type="protein sequence ID" value="AAC52868.1"/>
    <property type="molecule type" value="mRNA"/>
</dbReference>
<dbReference type="SMR" id="P70289"/>
<dbReference type="FunCoup" id="P70289">
    <property type="interactions" value="1"/>
</dbReference>
<dbReference type="GlyCosmos" id="P70289">
    <property type="glycosylation" value="19 sites, No reported glycans"/>
</dbReference>
<dbReference type="GlyGen" id="P70289">
    <property type="glycosylation" value="20 sites, 1 N-linked glycan (1 site)"/>
</dbReference>
<dbReference type="PeptideAtlas" id="P70289"/>
<dbReference type="AGR" id="MGI:108027"/>
<dbReference type="MGI" id="MGI:108027">
    <property type="gene designation" value="Ptprv"/>
</dbReference>
<dbReference type="InParanoid" id="P70289"/>
<dbReference type="PRO" id="PR:P70289"/>
<dbReference type="Proteomes" id="UP000000589">
    <property type="component" value="Unplaced"/>
</dbReference>
<dbReference type="RNAct" id="P70289">
    <property type="molecule type" value="protein"/>
</dbReference>
<dbReference type="GO" id="GO:0016020">
    <property type="term" value="C:membrane"/>
    <property type="evidence" value="ECO:0007669"/>
    <property type="project" value="UniProtKB-SubCell"/>
</dbReference>
<dbReference type="GO" id="GO:0004725">
    <property type="term" value="F:protein tyrosine phosphatase activity"/>
    <property type="evidence" value="ECO:0000314"/>
    <property type="project" value="UniProtKB"/>
</dbReference>
<dbReference type="GO" id="GO:0032869">
    <property type="term" value="P:cellular response to insulin stimulus"/>
    <property type="evidence" value="ECO:0000315"/>
    <property type="project" value="MGI"/>
</dbReference>
<dbReference type="GO" id="GO:0030330">
    <property type="term" value="P:DNA damage response, signal transduction by p53 class mediator"/>
    <property type="evidence" value="ECO:0000316"/>
    <property type="project" value="MGI"/>
</dbReference>
<dbReference type="GO" id="GO:0048144">
    <property type="term" value="P:fibroblast proliferation"/>
    <property type="evidence" value="ECO:0000315"/>
    <property type="project" value="MGI"/>
</dbReference>
<dbReference type="GO" id="GO:0042593">
    <property type="term" value="P:glucose homeostasis"/>
    <property type="evidence" value="ECO:0000315"/>
    <property type="project" value="MGI"/>
</dbReference>
<dbReference type="GO" id="GO:0016042">
    <property type="term" value="P:lipid catabolic process"/>
    <property type="evidence" value="ECO:0000315"/>
    <property type="project" value="MGI"/>
</dbReference>
<dbReference type="GO" id="GO:0031571">
    <property type="term" value="P:mitotic G1 DNA damage checkpoint signaling"/>
    <property type="evidence" value="ECO:0000315"/>
    <property type="project" value="MGI"/>
</dbReference>
<dbReference type="GO" id="GO:0048147">
    <property type="term" value="P:negative regulation of fibroblast proliferation"/>
    <property type="evidence" value="ECO:0000315"/>
    <property type="project" value="MGI"/>
</dbReference>
<dbReference type="GO" id="GO:0046676">
    <property type="term" value="P:negative regulation of insulin secretion"/>
    <property type="evidence" value="ECO:0000315"/>
    <property type="project" value="MGI"/>
</dbReference>
<dbReference type="GO" id="GO:0031016">
    <property type="term" value="P:pancreas development"/>
    <property type="evidence" value="ECO:0000315"/>
    <property type="project" value="MGI"/>
</dbReference>
<dbReference type="GO" id="GO:0044342">
    <property type="term" value="P:type B pancreatic cell proliferation"/>
    <property type="evidence" value="ECO:0000315"/>
    <property type="project" value="MGI"/>
</dbReference>
<dbReference type="CDD" id="cd00063">
    <property type="entry name" value="FN3"/>
    <property type="match status" value="3"/>
</dbReference>
<dbReference type="CDD" id="cd14618">
    <property type="entry name" value="R-PTPc-V"/>
    <property type="match status" value="1"/>
</dbReference>
<dbReference type="FunFam" id="2.60.40.10:FF:000369">
    <property type="entry name" value="Protein tyrosine phosphatase, receptor type B"/>
    <property type="match status" value="3"/>
</dbReference>
<dbReference type="FunFam" id="3.90.190.10:FF:000009">
    <property type="entry name" value="Receptor-type tyrosine-protein phosphatase beta"/>
    <property type="match status" value="1"/>
</dbReference>
<dbReference type="FunFam" id="3.90.190.10:FF:000149">
    <property type="entry name" value="Receptor-type tyrosine-protein phosphatase V"/>
    <property type="match status" value="1"/>
</dbReference>
<dbReference type="Gene3D" id="2.60.40.10">
    <property type="entry name" value="Immunoglobulins"/>
    <property type="match status" value="5"/>
</dbReference>
<dbReference type="Gene3D" id="3.90.190.10">
    <property type="entry name" value="Protein tyrosine phosphatase superfamily"/>
    <property type="match status" value="2"/>
</dbReference>
<dbReference type="InterPro" id="IPR003961">
    <property type="entry name" value="FN3_dom"/>
</dbReference>
<dbReference type="InterPro" id="IPR036116">
    <property type="entry name" value="FN3_sf"/>
</dbReference>
<dbReference type="InterPro" id="IPR013783">
    <property type="entry name" value="Ig-like_fold"/>
</dbReference>
<dbReference type="InterPro" id="IPR029021">
    <property type="entry name" value="Prot-tyrosine_phosphatase-like"/>
</dbReference>
<dbReference type="InterPro" id="IPR000242">
    <property type="entry name" value="PTP_cat"/>
</dbReference>
<dbReference type="InterPro" id="IPR041201">
    <property type="entry name" value="PTPRJ_TM"/>
</dbReference>
<dbReference type="InterPro" id="IPR050713">
    <property type="entry name" value="RTP_Phos/Ushers"/>
</dbReference>
<dbReference type="InterPro" id="IPR016130">
    <property type="entry name" value="Tyr_Pase_AS"/>
</dbReference>
<dbReference type="InterPro" id="IPR003595">
    <property type="entry name" value="Tyr_Pase_cat"/>
</dbReference>
<dbReference type="InterPro" id="IPR000387">
    <property type="entry name" value="Tyr_Pase_dom"/>
</dbReference>
<dbReference type="PANTHER" id="PTHR46957">
    <property type="entry name" value="CYTOKINE RECEPTOR"/>
    <property type="match status" value="1"/>
</dbReference>
<dbReference type="PANTHER" id="PTHR46957:SF10">
    <property type="entry name" value="PROTEIN TYROSINE PHOSPHATASE, RECEPTOR TYPE, H"/>
    <property type="match status" value="1"/>
</dbReference>
<dbReference type="Pfam" id="PF00041">
    <property type="entry name" value="fn3"/>
    <property type="match status" value="2"/>
</dbReference>
<dbReference type="Pfam" id="PF18861">
    <property type="entry name" value="PTP_tm"/>
    <property type="match status" value="1"/>
</dbReference>
<dbReference type="Pfam" id="PF00102">
    <property type="entry name" value="Y_phosphatase"/>
    <property type="match status" value="2"/>
</dbReference>
<dbReference type="PRINTS" id="PR00700">
    <property type="entry name" value="PRTYPHPHTASE"/>
</dbReference>
<dbReference type="SMART" id="SM00060">
    <property type="entry name" value="FN3"/>
    <property type="match status" value="9"/>
</dbReference>
<dbReference type="SMART" id="SM00194">
    <property type="entry name" value="PTPc"/>
    <property type="match status" value="1"/>
</dbReference>
<dbReference type="SMART" id="SM00404">
    <property type="entry name" value="PTPc_motif"/>
    <property type="match status" value="2"/>
</dbReference>
<dbReference type="SUPFAM" id="SSF52799">
    <property type="entry name" value="(Phosphotyrosine protein) phosphatases II"/>
    <property type="match status" value="2"/>
</dbReference>
<dbReference type="SUPFAM" id="SSF49265">
    <property type="entry name" value="Fibronectin type III"/>
    <property type="match status" value="8"/>
</dbReference>
<dbReference type="PROSITE" id="PS50853">
    <property type="entry name" value="FN3"/>
    <property type="match status" value="5"/>
</dbReference>
<dbReference type="PROSITE" id="PS00383">
    <property type="entry name" value="TYR_PHOSPHATASE_1"/>
    <property type="match status" value="1"/>
</dbReference>
<dbReference type="PROSITE" id="PS50056">
    <property type="entry name" value="TYR_PHOSPHATASE_2"/>
    <property type="match status" value="1"/>
</dbReference>
<dbReference type="PROSITE" id="PS50055">
    <property type="entry name" value="TYR_PHOSPHATASE_PTP"/>
    <property type="match status" value="2"/>
</dbReference>
<reference key="1">
    <citation type="journal article" date="1996" name="Mech. Dev.">
        <title>Identification of a developmentally regulated protein tyrosine phosphatase in embryonic stem cells that is a marker of pluripotential epiblast and early mesoderm.</title>
        <authorList>
            <person name="Lee K."/>
            <person name="Nichols J."/>
            <person name="Smith A."/>
        </authorList>
    </citation>
    <scope>NUCLEOTIDE SEQUENCE [MRNA]</scope>
    <source>
        <tissue>Embryonic stem cell</tissue>
    </source>
</reference>
<reference key="2">
    <citation type="journal article" date="1996" name="Mech. Dev.">
        <authorList>
            <person name="Lee K."/>
            <person name="Nichols J."/>
            <person name="Smith A."/>
        </authorList>
    </citation>
    <scope>ERRATUM OF PUBMED:8951793</scope>
</reference>
<reference key="3">
    <citation type="journal article" date="2007" name="Cell">
        <title>Endocrine regulation of energy metabolism by the skeleton.</title>
        <authorList>
            <person name="Lee N.K."/>
            <person name="Sowa H."/>
            <person name="Hinoi E."/>
            <person name="Ferron M."/>
            <person name="Ahn J.D."/>
            <person name="Confavreux C."/>
            <person name="Dacquin R."/>
            <person name="Mee P.J."/>
            <person name="McKee M.D."/>
            <person name="Jung D.Y."/>
            <person name="Zhang Z."/>
            <person name="Kim J.K."/>
            <person name="Mauvais-Jarvis F."/>
            <person name="Ducy P."/>
            <person name="Karsenty G."/>
        </authorList>
    </citation>
    <scope>FUNCTION</scope>
    <scope>DISRUPTION PHENOTYPE</scope>
</reference>
<reference key="4">
    <citation type="journal article" date="2010" name="Cell">
        <title>Insulin signaling in osteoblasts integrates bone remodeling and energy metabolism.</title>
        <authorList>
            <person name="Ferron M."/>
            <person name="Wei J."/>
            <person name="Yoshizawa T."/>
            <person name="Del Fattore A."/>
            <person name="DePinho R.A."/>
            <person name="Teti A."/>
            <person name="Ducy P."/>
            <person name="Karsenty G."/>
        </authorList>
    </citation>
    <scope>FUNCTION</scope>
    <scope>CATALYTIC ACTIVITY</scope>
</reference>